<dbReference type="EC" id="1.1.1.-"/>
<dbReference type="EMBL" id="AC004411">
    <property type="protein sequence ID" value="AAC34218.1"/>
    <property type="molecule type" value="Genomic_DNA"/>
</dbReference>
<dbReference type="EMBL" id="CP002685">
    <property type="protein sequence ID" value="AEC10804.1"/>
    <property type="molecule type" value="Genomic_DNA"/>
</dbReference>
<dbReference type="PIR" id="T02176">
    <property type="entry name" value="T02176"/>
</dbReference>
<dbReference type="RefSeq" id="NP_182234.1">
    <property type="nucleotide sequence ID" value="NM_130280.1"/>
</dbReference>
<dbReference type="SMR" id="O80714"/>
<dbReference type="FunCoup" id="O80714">
    <property type="interactions" value="227"/>
</dbReference>
<dbReference type="STRING" id="3702.O80714"/>
<dbReference type="PaxDb" id="3702-AT2G47120.1"/>
<dbReference type="EnsemblPlants" id="AT2G47120.1">
    <property type="protein sequence ID" value="AT2G47120.1"/>
    <property type="gene ID" value="AT2G47120"/>
</dbReference>
<dbReference type="GeneID" id="819325"/>
<dbReference type="Gramene" id="AT2G47120.1">
    <property type="protein sequence ID" value="AT2G47120.1"/>
    <property type="gene ID" value="AT2G47120"/>
</dbReference>
<dbReference type="KEGG" id="ath:AT2G47120"/>
<dbReference type="Araport" id="AT2G47120"/>
<dbReference type="TAIR" id="AT2G47120"/>
<dbReference type="eggNOG" id="KOG0725">
    <property type="taxonomic scope" value="Eukaryota"/>
</dbReference>
<dbReference type="HOGENOM" id="CLU_010194_1_0_1"/>
<dbReference type="InParanoid" id="O80714"/>
<dbReference type="PhylomeDB" id="O80714"/>
<dbReference type="PRO" id="PR:O80714"/>
<dbReference type="Proteomes" id="UP000006548">
    <property type="component" value="Chromosome 2"/>
</dbReference>
<dbReference type="ExpressionAtlas" id="O80714">
    <property type="expression patterns" value="baseline and differential"/>
</dbReference>
<dbReference type="GO" id="GO:0016491">
    <property type="term" value="F:oxidoreductase activity"/>
    <property type="evidence" value="ECO:0007669"/>
    <property type="project" value="UniProtKB-KW"/>
</dbReference>
<dbReference type="FunFam" id="3.40.50.720:FF:000084">
    <property type="entry name" value="Short-chain dehydrogenase reductase"/>
    <property type="match status" value="1"/>
</dbReference>
<dbReference type="Gene3D" id="3.40.50.720">
    <property type="entry name" value="NAD(P)-binding Rossmann-like Domain"/>
    <property type="match status" value="1"/>
</dbReference>
<dbReference type="InterPro" id="IPR036291">
    <property type="entry name" value="NAD(P)-bd_dom_sf"/>
</dbReference>
<dbReference type="InterPro" id="IPR002347">
    <property type="entry name" value="SDR_fam"/>
</dbReference>
<dbReference type="PANTHER" id="PTHR42820">
    <property type="entry name" value="SHORT-CHAIN DEHYDROGENASE REDUCTASE"/>
    <property type="match status" value="1"/>
</dbReference>
<dbReference type="PANTHER" id="PTHR42820:SF12">
    <property type="entry name" value="SHORT-CHAIN DEHYDROGENASE REDUCTASE 3C"/>
    <property type="match status" value="1"/>
</dbReference>
<dbReference type="Pfam" id="PF13561">
    <property type="entry name" value="adh_short_C2"/>
    <property type="match status" value="1"/>
</dbReference>
<dbReference type="PRINTS" id="PR00081">
    <property type="entry name" value="GDHRDH"/>
</dbReference>
<dbReference type="PRINTS" id="PR00080">
    <property type="entry name" value="SDRFAMILY"/>
</dbReference>
<dbReference type="SUPFAM" id="SSF51735">
    <property type="entry name" value="NAD(P)-binding Rossmann-fold domains"/>
    <property type="match status" value="1"/>
</dbReference>
<accession>O80714</accession>
<organism>
    <name type="scientific">Arabidopsis thaliana</name>
    <name type="common">Mouse-ear cress</name>
    <dbReference type="NCBI Taxonomy" id="3702"/>
    <lineage>
        <taxon>Eukaryota</taxon>
        <taxon>Viridiplantae</taxon>
        <taxon>Streptophyta</taxon>
        <taxon>Embryophyta</taxon>
        <taxon>Tracheophyta</taxon>
        <taxon>Spermatophyta</taxon>
        <taxon>Magnoliopsida</taxon>
        <taxon>eudicotyledons</taxon>
        <taxon>Gunneridae</taxon>
        <taxon>Pentapetalae</taxon>
        <taxon>rosids</taxon>
        <taxon>malvids</taxon>
        <taxon>Brassicales</taxon>
        <taxon>Brassicaceae</taxon>
        <taxon>Camelineae</taxon>
        <taxon>Arabidopsis</taxon>
    </lineage>
</organism>
<feature type="chain" id="PRO_0000419513" description="Short-chain dehydrogenase reductase 3c">
    <location>
        <begin position="1"/>
        <end position="258"/>
    </location>
</feature>
<feature type="active site" description="Proton acceptor" evidence="1">
    <location>
        <position position="156"/>
    </location>
</feature>
<feature type="binding site" evidence="1">
    <location>
        <begin position="12"/>
        <end position="36"/>
    </location>
    <ligand>
        <name>NAD(+)</name>
        <dbReference type="ChEBI" id="CHEBI:57540"/>
    </ligand>
</feature>
<feature type="binding site" evidence="1">
    <location>
        <position position="144"/>
    </location>
    <ligand>
        <name>substrate</name>
    </ligand>
</feature>
<comment type="similarity">
    <text evidence="2">Belongs to the short-chain dehydrogenases/reductases (SDR) family.</text>
</comment>
<proteinExistence type="inferred from homology"/>
<keyword id="KW-0560">Oxidoreductase</keyword>
<keyword id="KW-1185">Reference proteome</keyword>
<reference key="1">
    <citation type="journal article" date="1999" name="Nature">
        <title>Sequence and analysis of chromosome 2 of the plant Arabidopsis thaliana.</title>
        <authorList>
            <person name="Lin X."/>
            <person name="Kaul S."/>
            <person name="Rounsley S.D."/>
            <person name="Shea T.P."/>
            <person name="Benito M.-I."/>
            <person name="Town C.D."/>
            <person name="Fujii C.Y."/>
            <person name="Mason T.M."/>
            <person name="Bowman C.L."/>
            <person name="Barnstead M.E."/>
            <person name="Feldblyum T.V."/>
            <person name="Buell C.R."/>
            <person name="Ketchum K.A."/>
            <person name="Lee J.J."/>
            <person name="Ronning C.M."/>
            <person name="Koo H.L."/>
            <person name="Moffat K.S."/>
            <person name="Cronin L.A."/>
            <person name="Shen M."/>
            <person name="Pai G."/>
            <person name="Van Aken S."/>
            <person name="Umayam L."/>
            <person name="Tallon L.J."/>
            <person name="Gill J.E."/>
            <person name="Adams M.D."/>
            <person name="Carrera A.J."/>
            <person name="Creasy T.H."/>
            <person name="Goodman H.M."/>
            <person name="Somerville C.R."/>
            <person name="Copenhaver G.P."/>
            <person name="Preuss D."/>
            <person name="Nierman W.C."/>
            <person name="White O."/>
            <person name="Eisen J.A."/>
            <person name="Salzberg S.L."/>
            <person name="Fraser C.M."/>
            <person name="Venter J.C."/>
        </authorList>
    </citation>
    <scope>NUCLEOTIDE SEQUENCE [LARGE SCALE GENOMIC DNA]</scope>
    <source>
        <strain>cv. Columbia</strain>
    </source>
</reference>
<reference key="2">
    <citation type="journal article" date="2017" name="Plant J.">
        <title>Araport11: a complete reannotation of the Arabidopsis thaliana reference genome.</title>
        <authorList>
            <person name="Cheng C.Y."/>
            <person name="Krishnakumar V."/>
            <person name="Chan A.P."/>
            <person name="Thibaud-Nissen F."/>
            <person name="Schobel S."/>
            <person name="Town C.D."/>
        </authorList>
    </citation>
    <scope>GENOME REANNOTATION</scope>
    <source>
        <strain>cv. Columbia</strain>
    </source>
</reference>
<protein>
    <recommendedName>
        <fullName>Short-chain dehydrogenase reductase 3c</fullName>
        <shortName>AtSDR3c</shortName>
        <ecNumber>1.1.1.-</ecNumber>
    </recommendedName>
</protein>
<gene>
    <name type="primary">SDR3c</name>
    <name type="ordered locus">At2g47120</name>
    <name type="ORF">F14M4</name>
</gene>
<sequence length="258" mass="27259">MSGLRLEGKIVIITGGASGIGADAARLFTDHGAKVVIVDVQEELGQNVAVLIGKDKASFYRCDVTNETEVEDAVKFTVEKHGKLDVLFSNAGVLEPLESFLDFDLERFDRIMAVNVRGAAAFIKHAARAMVEKGTRGSIVCTTSVSAEIGGGHHGYTASKHGLVGLIRSACGDLGKYGIRVNGVAPYAVATPMTSHDEVTGKQLEDYFDAKGILKGMVLKASHVAQVALFLASDDSAYISGQNLAVDGGYTVVKPSRD</sequence>
<evidence type="ECO:0000250" key="1"/>
<evidence type="ECO:0000305" key="2"/>
<name>SDR3C_ARATH</name>